<dbReference type="EMBL" id="U73653">
    <property type="protein sequence ID" value="AAD00218.1"/>
    <property type="status" value="ALT_INIT"/>
    <property type="molecule type" value="Genomic_DNA"/>
</dbReference>
<dbReference type="EMBL" id="LT708304">
    <property type="protein sequence ID" value="SIT98958.1"/>
    <property type="molecule type" value="Genomic_DNA"/>
</dbReference>
<dbReference type="RefSeq" id="NP_854054.1">
    <property type="nucleotide sequence ID" value="NC_002945.3"/>
</dbReference>
<dbReference type="RefSeq" id="WP_003401905.1">
    <property type="nucleotide sequence ID" value="NC_002945.4"/>
</dbReference>
<dbReference type="SMR" id="P63287"/>
<dbReference type="PATRIC" id="fig|233413.5.peg.426"/>
<dbReference type="Proteomes" id="UP000001419">
    <property type="component" value="Chromosome"/>
</dbReference>
<dbReference type="GO" id="GO:0005737">
    <property type="term" value="C:cytoplasm"/>
    <property type="evidence" value="ECO:0007669"/>
    <property type="project" value="UniProtKB-SubCell"/>
</dbReference>
<dbReference type="GO" id="GO:0005524">
    <property type="term" value="F:ATP binding"/>
    <property type="evidence" value="ECO:0007669"/>
    <property type="project" value="UniProtKB-KW"/>
</dbReference>
<dbReference type="GO" id="GO:0016887">
    <property type="term" value="F:ATP hydrolysis activity"/>
    <property type="evidence" value="ECO:0007669"/>
    <property type="project" value="InterPro"/>
</dbReference>
<dbReference type="GO" id="GO:0034605">
    <property type="term" value="P:cellular response to heat"/>
    <property type="evidence" value="ECO:0007669"/>
    <property type="project" value="TreeGrafter"/>
</dbReference>
<dbReference type="GO" id="GO:0042026">
    <property type="term" value="P:protein refolding"/>
    <property type="evidence" value="ECO:0007669"/>
    <property type="project" value="InterPro"/>
</dbReference>
<dbReference type="CDD" id="cd00009">
    <property type="entry name" value="AAA"/>
    <property type="match status" value="1"/>
</dbReference>
<dbReference type="CDD" id="cd19499">
    <property type="entry name" value="RecA-like_ClpB_Hsp104-like"/>
    <property type="match status" value="1"/>
</dbReference>
<dbReference type="FunFam" id="1.10.8.60:FF:000017">
    <property type="entry name" value="ATP-dependent chaperone ClpB"/>
    <property type="match status" value="1"/>
</dbReference>
<dbReference type="FunFam" id="3.40.50.300:FF:000120">
    <property type="entry name" value="ATP-dependent chaperone ClpB"/>
    <property type="match status" value="1"/>
</dbReference>
<dbReference type="FunFam" id="3.40.50.300:FF:000025">
    <property type="entry name" value="ATP-dependent Clp protease subunit"/>
    <property type="match status" value="1"/>
</dbReference>
<dbReference type="FunFam" id="3.40.50.300:FF:000010">
    <property type="entry name" value="Chaperone clpB 1, putative"/>
    <property type="match status" value="1"/>
</dbReference>
<dbReference type="FunFam" id="1.10.1780.10:FF:000007">
    <property type="entry name" value="Chaperone protein ClpB"/>
    <property type="match status" value="1"/>
</dbReference>
<dbReference type="Gene3D" id="1.10.8.60">
    <property type="match status" value="1"/>
</dbReference>
<dbReference type="Gene3D" id="1.10.1780.10">
    <property type="entry name" value="Clp, N-terminal domain"/>
    <property type="match status" value="1"/>
</dbReference>
<dbReference type="Gene3D" id="3.40.50.300">
    <property type="entry name" value="P-loop containing nucleotide triphosphate hydrolases"/>
    <property type="match status" value="3"/>
</dbReference>
<dbReference type="InterPro" id="IPR003593">
    <property type="entry name" value="AAA+_ATPase"/>
</dbReference>
<dbReference type="InterPro" id="IPR003959">
    <property type="entry name" value="ATPase_AAA_core"/>
</dbReference>
<dbReference type="InterPro" id="IPR017730">
    <property type="entry name" value="Chaperonin_ClpB"/>
</dbReference>
<dbReference type="InterPro" id="IPR019489">
    <property type="entry name" value="Clp_ATPase_C"/>
</dbReference>
<dbReference type="InterPro" id="IPR036628">
    <property type="entry name" value="Clp_N_dom_sf"/>
</dbReference>
<dbReference type="InterPro" id="IPR004176">
    <property type="entry name" value="Clp_R_dom"/>
</dbReference>
<dbReference type="InterPro" id="IPR001270">
    <property type="entry name" value="ClpA/B"/>
</dbReference>
<dbReference type="InterPro" id="IPR018368">
    <property type="entry name" value="ClpA/B_CS1"/>
</dbReference>
<dbReference type="InterPro" id="IPR028299">
    <property type="entry name" value="ClpA/B_CS2"/>
</dbReference>
<dbReference type="InterPro" id="IPR041546">
    <property type="entry name" value="ClpA/ClpB_AAA_lid"/>
</dbReference>
<dbReference type="InterPro" id="IPR050130">
    <property type="entry name" value="ClpA_ClpB"/>
</dbReference>
<dbReference type="InterPro" id="IPR027417">
    <property type="entry name" value="P-loop_NTPase"/>
</dbReference>
<dbReference type="NCBIfam" id="TIGR03346">
    <property type="entry name" value="chaperone_ClpB"/>
    <property type="match status" value="1"/>
</dbReference>
<dbReference type="PANTHER" id="PTHR11638">
    <property type="entry name" value="ATP-DEPENDENT CLP PROTEASE"/>
    <property type="match status" value="1"/>
</dbReference>
<dbReference type="PANTHER" id="PTHR11638:SF18">
    <property type="entry name" value="HEAT SHOCK PROTEIN 104"/>
    <property type="match status" value="1"/>
</dbReference>
<dbReference type="Pfam" id="PF00004">
    <property type="entry name" value="AAA"/>
    <property type="match status" value="1"/>
</dbReference>
<dbReference type="Pfam" id="PF07724">
    <property type="entry name" value="AAA_2"/>
    <property type="match status" value="1"/>
</dbReference>
<dbReference type="Pfam" id="PF17871">
    <property type="entry name" value="AAA_lid_9"/>
    <property type="match status" value="1"/>
</dbReference>
<dbReference type="Pfam" id="PF02861">
    <property type="entry name" value="Clp_N"/>
    <property type="match status" value="2"/>
</dbReference>
<dbReference type="Pfam" id="PF10431">
    <property type="entry name" value="ClpB_D2-small"/>
    <property type="match status" value="1"/>
</dbReference>
<dbReference type="PRINTS" id="PR00300">
    <property type="entry name" value="CLPPROTEASEA"/>
</dbReference>
<dbReference type="SMART" id="SM00382">
    <property type="entry name" value="AAA"/>
    <property type="match status" value="2"/>
</dbReference>
<dbReference type="SMART" id="SM01086">
    <property type="entry name" value="ClpB_D2-small"/>
    <property type="match status" value="1"/>
</dbReference>
<dbReference type="SUPFAM" id="SSF81923">
    <property type="entry name" value="Double Clp-N motif"/>
    <property type="match status" value="1"/>
</dbReference>
<dbReference type="SUPFAM" id="SSF52540">
    <property type="entry name" value="P-loop containing nucleoside triphosphate hydrolases"/>
    <property type="match status" value="2"/>
</dbReference>
<dbReference type="PROSITE" id="PS51903">
    <property type="entry name" value="CLP_R"/>
    <property type="match status" value="1"/>
</dbReference>
<dbReference type="PROSITE" id="PS00870">
    <property type="entry name" value="CLPAB_1"/>
    <property type="match status" value="1"/>
</dbReference>
<dbReference type="PROSITE" id="PS00871">
    <property type="entry name" value="CLPAB_2"/>
    <property type="match status" value="1"/>
</dbReference>
<organism>
    <name type="scientific">Mycobacterium bovis (strain ATCC BAA-935 / AF2122/97)</name>
    <dbReference type="NCBI Taxonomy" id="233413"/>
    <lineage>
        <taxon>Bacteria</taxon>
        <taxon>Bacillati</taxon>
        <taxon>Actinomycetota</taxon>
        <taxon>Actinomycetes</taxon>
        <taxon>Mycobacteriales</taxon>
        <taxon>Mycobacteriaceae</taxon>
        <taxon>Mycobacterium</taxon>
        <taxon>Mycobacterium tuberculosis complex</taxon>
    </lineage>
</organism>
<feature type="chain" id="PRO_0000191139" description="Chaperone protein ClpB">
    <location>
        <begin position="1"/>
        <end position="848"/>
    </location>
</feature>
<feature type="domain" description="Clp R" evidence="2">
    <location>
        <begin position="1"/>
        <end position="146"/>
    </location>
</feature>
<feature type="region of interest" description="Repeat 1" evidence="2">
    <location>
        <begin position="6"/>
        <end position="71"/>
    </location>
</feature>
<feature type="region of interest" description="Repeat 2" evidence="2">
    <location>
        <begin position="83"/>
        <end position="146"/>
    </location>
</feature>
<feature type="region of interest" description="NBD1" evidence="1">
    <location>
        <begin position="159"/>
        <end position="341"/>
    </location>
</feature>
<feature type="region of interest" description="Linker" evidence="1">
    <location>
        <begin position="342"/>
        <end position="547"/>
    </location>
</feature>
<feature type="region of interest" description="NBD2" evidence="1">
    <location>
        <begin position="557"/>
        <end position="755"/>
    </location>
</feature>
<feature type="region of interest" description="C-terminal" evidence="1">
    <location>
        <begin position="756"/>
        <end position="848"/>
    </location>
</feature>
<feature type="coiled-coil region" evidence="1">
    <location>
        <begin position="392"/>
        <end position="524"/>
    </location>
</feature>
<feature type="binding site" evidence="1">
    <location>
        <begin position="206"/>
        <end position="213"/>
    </location>
    <ligand>
        <name>ATP</name>
        <dbReference type="ChEBI" id="CHEBI:30616"/>
        <label>1</label>
    </ligand>
</feature>
<feature type="binding site" evidence="1">
    <location>
        <begin position="607"/>
        <end position="614"/>
    </location>
    <ligand>
        <name>ATP</name>
        <dbReference type="ChEBI" id="CHEBI:30616"/>
        <label>2</label>
    </ligand>
</feature>
<proteinExistence type="inferred from homology"/>
<keyword id="KW-0067">ATP-binding</keyword>
<keyword id="KW-0143">Chaperone</keyword>
<keyword id="KW-0175">Coiled coil</keyword>
<keyword id="KW-0963">Cytoplasm</keyword>
<keyword id="KW-0547">Nucleotide-binding</keyword>
<keyword id="KW-1185">Reference proteome</keyword>
<keyword id="KW-0677">Repeat</keyword>
<keyword id="KW-0346">Stress response</keyword>
<protein>
    <recommendedName>
        <fullName>Chaperone protein ClpB</fullName>
    </recommendedName>
</protein>
<reference key="1">
    <citation type="journal article" date="1997" name="Tuber. Lung Dis.">
        <title>Immunological screening of a genomic M. bovis BCG library expressed in M. smegmatis and identification of the M. bovis BCG analog of ClpB.</title>
        <authorList>
            <person name="Bona M."/>
            <person name="Nayak R."/>
            <person name="Wu M."/>
            <person name="Mincek M."/>
            <person name="Ellner J.J."/>
        </authorList>
    </citation>
    <scope>NUCLEOTIDE SEQUENCE [GENOMIC DNA]</scope>
    <source>
        <strain>BCG / Pasteur</strain>
    </source>
</reference>
<reference key="2">
    <citation type="journal article" date="2003" name="Proc. Natl. Acad. Sci. U.S.A.">
        <title>The complete genome sequence of Mycobacterium bovis.</title>
        <authorList>
            <person name="Garnier T."/>
            <person name="Eiglmeier K."/>
            <person name="Camus J.-C."/>
            <person name="Medina N."/>
            <person name="Mansoor H."/>
            <person name="Pryor M."/>
            <person name="Duthoy S."/>
            <person name="Grondin S."/>
            <person name="Lacroix C."/>
            <person name="Monsempe C."/>
            <person name="Simon S."/>
            <person name="Harris B."/>
            <person name="Atkin R."/>
            <person name="Doggett J."/>
            <person name="Mayes R."/>
            <person name="Keating L."/>
            <person name="Wheeler P.R."/>
            <person name="Parkhill J."/>
            <person name="Barrell B.G."/>
            <person name="Cole S.T."/>
            <person name="Gordon S.V."/>
            <person name="Hewinson R.G."/>
        </authorList>
    </citation>
    <scope>NUCLEOTIDE SEQUENCE [LARGE SCALE GENOMIC DNA]</scope>
    <source>
        <strain>ATCC BAA-935 / AF2122/97</strain>
    </source>
</reference>
<reference key="3">
    <citation type="journal article" date="2017" name="Genome Announc.">
        <title>Updated reference genome sequence and annotation of Mycobacterium bovis AF2122/97.</title>
        <authorList>
            <person name="Malone K.M."/>
            <person name="Farrell D."/>
            <person name="Stuber T.P."/>
            <person name="Schubert O.T."/>
            <person name="Aebersold R."/>
            <person name="Robbe-Austerman S."/>
            <person name="Gordon S.V."/>
        </authorList>
    </citation>
    <scope>NUCLEOTIDE SEQUENCE [LARGE SCALE GENOMIC DNA]</scope>
    <scope>GENOME REANNOTATION</scope>
    <source>
        <strain>ATCC BAA-935 / AF2122/97</strain>
    </source>
</reference>
<evidence type="ECO:0000250" key="1"/>
<evidence type="ECO:0000255" key="2">
    <source>
        <dbReference type="PROSITE-ProRule" id="PRU01251"/>
    </source>
</evidence>
<evidence type="ECO:0000305" key="3"/>
<accession>P63287</accession>
<accession>A0A1R3XVD4</accession>
<accession>O53719</accession>
<accession>Q9ZAX2</accession>
<accession>X2BEW5</accession>
<comment type="function">
    <text evidence="1">Part of a stress-induced multi-chaperone system, it is involved in the recovery of the cell from heat-induced damage, in cooperation with DnaK, DnaJ and GrpE. Acts before DnaK, in the processing of protein aggregates. Protein binding stimulates the ATPase activity; ATP hydrolysis unfolds the denatured protein aggregates, which probably helps expose new hydrophobic binding sites on the surface of ClpB-bound aggregates, contributing to the solubilization and refolding of denatured protein aggregates by DnaK (By similarity).</text>
</comment>
<comment type="subunit">
    <text evidence="1">Homohexamer. The oligomerization is ATP-dependent (By similarity).</text>
</comment>
<comment type="subcellular location">
    <subcellularLocation>
        <location evidence="3">Cytoplasm</location>
    </subcellularLocation>
</comment>
<comment type="domain">
    <text evidence="1">The Clp repeat (R) domain probably functions as a substrate-discriminating domain, recruiting aggregated proteins to the ClpB hexamer and/or stabilizing bound proteins. The NBD2 domain is responsible for oligomerization, whereas the NBD1 domain stabilizes the hexamer probably in an ATP-dependent manner. The movement of the coiled-coil domain is essential for ClpB ability to rescue proteins from an aggregated state, probably by pulling apart large aggregated proteins, which are bound between the coiled-coils motifs of adjacent ClpB subunits in the functional hexamer (By similarity).</text>
</comment>
<comment type="similarity">
    <text evidence="3">Belongs to the ClpA/ClpB family.</text>
</comment>
<comment type="sequence caution" evidence="3">
    <conflict type="erroneous initiation">
        <sequence resource="EMBL-CDS" id="AAD00218"/>
    </conflict>
</comment>
<sequence>MDSFNPTTKTQAALTAALQAASTAGNPEIRPAHLLMALLTQNDGIAAPLLEAVGVEPATVRAETQRLLDRLPQATGASTQPQLSRESLAAITTAQQLATELDDEYVSTEHVMVGLATGDSDVAKLLTGHGASPQALREAFVKVRGSARVTSPEPEATYQALQKYSTDLTARAREGKLDPVIGRDNEIRRVVQVLSRRTKNNPVLIGEPGVGKTAIVEGLAQRIVAGDVPESLRDKTIVALDLGSMVAGSKYRGEFEERLKAVLDDIKNSAGQIITFIDELHTIVGAGATGEGAMDAGNMIKPMLARGELRLVGATTLDEYRKHIEKDAALERRFQQVYVGEPSVEDTIGILRGLKDRYEVHHGVRITDSALVAAATLSDRYITARFLPDKAIDLVDEAASRLRMEIDSRPVEIDEVERLVRRLEIEEMALSKEEDEASAERLAKLRSELADQKEKLAELTTRWQNEKNAIEIVRDLKEQLEALRGESERAERDGDLAKAAELRYGRIPEVEKKLDAALPQAQAREQVMLKEEVGPDDIADVVSAWTGIPAGRLLEGETAKLLRMEDELGKRVIGQKAAVTAVSDAVRRSRAGVSDPNRPTGAFMFLGPTGVGKTELAKALADFLFDDERAMVRIDMSEYGEKHTVARLIGAPPGYVGYEAGGQLTEAVRRRPYTVVLFDEIEKAHPDVFDVLLQVLDEGRLTDGHGRTVDFRNTILILTSNLGSGGSAEQVLAAVRATFKPEFINRLDDVLIFEGLNPEELVRIVDIQLAQLGKRLAQRRLQLQVSLPAKRWLAQRGFDPVYGARPLRRLVQQAIGDQLAKMLLAGQVHDGDTVPVNVSPDADSLILG</sequence>
<name>CLPB_MYCBO</name>
<gene>
    <name type="primary">clpB</name>
    <name type="ordered locus">BQ2027_MB0391C</name>
</gene>